<accession>F8VPQ2</accession>
<accession>B2RXT8</accession>
<accession>B2RY61</accession>
<accession>Q05CI2</accession>
<accession>Q6PE90</accession>
<proteinExistence type="evidence at protein level"/>
<reference evidence="14" key="1">
    <citation type="journal article" date="2009" name="PLoS Biol.">
        <title>Lineage-specific biology revealed by a finished genome assembly of the mouse.</title>
        <authorList>
            <person name="Church D.M."/>
            <person name="Goodstadt L."/>
            <person name="Hillier L.W."/>
            <person name="Zody M.C."/>
            <person name="Goldstein S."/>
            <person name="She X."/>
            <person name="Bult C.J."/>
            <person name="Agarwala R."/>
            <person name="Cherry J.L."/>
            <person name="DiCuccio M."/>
            <person name="Hlavina W."/>
            <person name="Kapustin Y."/>
            <person name="Meric P."/>
            <person name="Maglott D."/>
            <person name="Birtle Z."/>
            <person name="Marques A.C."/>
            <person name="Graves T."/>
            <person name="Zhou S."/>
            <person name="Teague B."/>
            <person name="Potamousis K."/>
            <person name="Churas C."/>
            <person name="Place M."/>
            <person name="Herschleb J."/>
            <person name="Runnheim R."/>
            <person name="Forrest D."/>
            <person name="Amos-Landgraf J."/>
            <person name="Schwartz D.C."/>
            <person name="Cheng Z."/>
            <person name="Lindblad-Toh K."/>
            <person name="Eichler E.E."/>
            <person name="Ponting C.P."/>
        </authorList>
    </citation>
    <scope>NUCLEOTIDE SEQUENCE [LARGE SCALE GENOMIC DNA]</scope>
    <source>
        <strain evidence="14">C57BL/6J</strain>
    </source>
</reference>
<reference evidence="12" key="2">
    <citation type="journal article" date="2004" name="Genome Res.">
        <title>The status, quality, and expansion of the NIH full-length cDNA project: the Mammalian Gene Collection (MGC).</title>
        <authorList>
            <consortium name="The MGC Project Team"/>
        </authorList>
    </citation>
    <scope>NUCLEOTIDE SEQUENCE [LARGE SCALE MRNA]</scope>
    <source>
        <tissue evidence="12">Brain</tissue>
    </source>
</reference>
<reference evidence="9" key="3">
    <citation type="journal article" date="2005" name="Genomics">
        <title>Nomenclature of the ARID family of DNA-binding proteins.</title>
        <authorList>
            <person name="Wilsker D."/>
            <person name="Probst L."/>
            <person name="Wain H.M."/>
            <person name="Maltais L."/>
            <person name="Tucker P.W."/>
            <person name="Moran E."/>
        </authorList>
    </citation>
    <scope>NOMENCLATURE</scope>
</reference>
<reference evidence="9" key="4">
    <citation type="journal article" date="2006" name="Genes Dev.">
        <title>Deficiency of Rbbp1/Arid4a and Rbbp1l1/Arid4b alters epigenetic modifications and suppresses an imprinting defect in the PWS/AS domain.</title>
        <authorList>
            <person name="Wu M.Y."/>
            <person name="Tsai T.F."/>
            <person name="Beaudet A.L."/>
        </authorList>
    </citation>
    <scope>FUNCTION</scope>
    <scope>INTERACTION WITH ARID4B</scope>
    <scope>DISRUPTION PHENOTYPE</scope>
</reference>
<reference evidence="9" key="5">
    <citation type="journal article" date="2008" name="J. Natl. Cancer Inst.">
        <title>Identification of chromatin remodeling genes Arid4a and Arid4b as leukemia suppressor genes.</title>
        <authorList>
            <person name="Wu M.Y."/>
            <person name="Eldin K.W."/>
            <person name="Beaudet A.L."/>
        </authorList>
    </citation>
    <scope>FUNCTION</scope>
    <scope>DISRUPTION PHENOTYPE</scope>
</reference>
<reference evidence="15" key="6">
    <citation type="journal article" date="2010" name="Cell">
        <title>A tissue-specific atlas of mouse protein phosphorylation and expression.</title>
        <authorList>
            <person name="Huttlin E.L."/>
            <person name="Jedrychowski M.P."/>
            <person name="Elias J.E."/>
            <person name="Goswami T."/>
            <person name="Rad R."/>
            <person name="Beausoleil S.A."/>
            <person name="Villen J."/>
            <person name="Haas W."/>
            <person name="Sowa M.E."/>
            <person name="Gygi S.P."/>
        </authorList>
    </citation>
    <scope>IDENTIFICATION BY MASS SPECTROMETRY [LARGE SCALE ANALYSIS]</scope>
</reference>
<reference evidence="9" key="7">
    <citation type="journal article" date="2013" name="Proc. Natl. Acad. Sci. U.S.A.">
        <title>ARID4A and ARID4B regulate male fertility, a functional link to the AR and RB pathways.</title>
        <authorList>
            <person name="Wu R.C."/>
            <person name="Jiang M."/>
            <person name="Beaudet A.L."/>
            <person name="Wu M.Y."/>
        </authorList>
    </citation>
    <scope>FUNCTION</scope>
    <scope>INTERACTION WITH AR</scope>
    <scope>TISSUE SPECIFICITY</scope>
    <scope>DISRUPTION PHENOTYPE</scope>
</reference>
<protein>
    <recommendedName>
        <fullName evidence="8 13">AT-rich interactive domain-containing protein 4A</fullName>
        <shortName>ARID domain-containing protein 4A</shortName>
    </recommendedName>
    <alternativeName>
        <fullName evidence="8">Retinoblastoma-binding protein 1</fullName>
    </alternativeName>
</protein>
<feature type="chain" id="PRO_0000444995" description="AT-rich interactive domain-containing protein 4A">
    <location>
        <begin position="1"/>
        <end position="1261"/>
    </location>
</feature>
<feature type="domain" description="ARID" evidence="3">
    <location>
        <begin position="309"/>
        <end position="401"/>
    </location>
</feature>
<feature type="domain" description="Tudor-knot" evidence="2">
    <location>
        <begin position="579"/>
        <end position="631"/>
    </location>
</feature>
<feature type="region of interest" description="DNA-binding" evidence="1">
    <location>
        <begin position="4"/>
        <end position="121"/>
    </location>
</feature>
<feature type="region of interest" description="Disordered" evidence="4">
    <location>
        <begin position="142"/>
        <end position="169"/>
    </location>
</feature>
<feature type="region of interest" description="Disordered" evidence="4">
    <location>
        <begin position="273"/>
        <end position="310"/>
    </location>
</feature>
<feature type="region of interest" description="Disordered" evidence="4">
    <location>
        <begin position="435"/>
        <end position="470"/>
    </location>
</feature>
<feature type="region of interest" description="Disordered" evidence="4">
    <location>
        <begin position="498"/>
        <end position="582"/>
    </location>
</feature>
<feature type="region of interest" description="Disordered" evidence="4">
    <location>
        <begin position="633"/>
        <end position="768"/>
    </location>
</feature>
<feature type="region of interest" description="Disordered" evidence="4">
    <location>
        <begin position="842"/>
        <end position="953"/>
    </location>
</feature>
<feature type="region of interest" description="Retinoblastoma protein binding" evidence="1">
    <location>
        <begin position="955"/>
        <end position="968"/>
    </location>
</feature>
<feature type="region of interest" description="Disordered" evidence="4">
    <location>
        <begin position="1067"/>
        <end position="1173"/>
    </location>
</feature>
<feature type="region of interest" description="Disordered" evidence="4">
    <location>
        <begin position="1216"/>
        <end position="1261"/>
    </location>
</feature>
<feature type="compositionally biased region" description="Acidic residues" evidence="4">
    <location>
        <begin position="151"/>
        <end position="165"/>
    </location>
</feature>
<feature type="compositionally biased region" description="Acidic residues" evidence="4">
    <location>
        <begin position="276"/>
        <end position="289"/>
    </location>
</feature>
<feature type="compositionally biased region" description="Basic and acidic residues" evidence="4">
    <location>
        <begin position="290"/>
        <end position="299"/>
    </location>
</feature>
<feature type="compositionally biased region" description="Acidic residues" evidence="4">
    <location>
        <begin position="300"/>
        <end position="310"/>
    </location>
</feature>
<feature type="compositionally biased region" description="Basic and acidic residues" evidence="4">
    <location>
        <begin position="512"/>
        <end position="522"/>
    </location>
</feature>
<feature type="compositionally biased region" description="Basic residues" evidence="4">
    <location>
        <begin position="526"/>
        <end position="536"/>
    </location>
</feature>
<feature type="compositionally biased region" description="Acidic residues" evidence="4">
    <location>
        <begin position="541"/>
        <end position="551"/>
    </location>
</feature>
<feature type="compositionally biased region" description="Basic and acidic residues" evidence="4">
    <location>
        <begin position="552"/>
        <end position="564"/>
    </location>
</feature>
<feature type="compositionally biased region" description="Acidic residues" evidence="4">
    <location>
        <begin position="565"/>
        <end position="574"/>
    </location>
</feature>
<feature type="compositionally biased region" description="Basic residues" evidence="4">
    <location>
        <begin position="640"/>
        <end position="649"/>
    </location>
</feature>
<feature type="compositionally biased region" description="Basic and acidic residues" evidence="4">
    <location>
        <begin position="650"/>
        <end position="665"/>
    </location>
</feature>
<feature type="compositionally biased region" description="Polar residues" evidence="4">
    <location>
        <begin position="676"/>
        <end position="689"/>
    </location>
</feature>
<feature type="compositionally biased region" description="Low complexity" evidence="4">
    <location>
        <begin position="690"/>
        <end position="702"/>
    </location>
</feature>
<feature type="compositionally biased region" description="Basic and acidic residues" evidence="4">
    <location>
        <begin position="708"/>
        <end position="753"/>
    </location>
</feature>
<feature type="compositionally biased region" description="Basic and acidic residues" evidence="4">
    <location>
        <begin position="899"/>
        <end position="909"/>
    </location>
</feature>
<feature type="compositionally biased region" description="Basic and acidic residues" evidence="4">
    <location>
        <begin position="929"/>
        <end position="947"/>
    </location>
</feature>
<feature type="compositionally biased region" description="Basic and acidic residues" evidence="4">
    <location>
        <begin position="1067"/>
        <end position="1080"/>
    </location>
</feature>
<feature type="compositionally biased region" description="Low complexity" evidence="4">
    <location>
        <begin position="1230"/>
        <end position="1252"/>
    </location>
</feature>
<feature type="modified residue" description="Phosphoserine" evidence="1">
    <location>
        <position position="679"/>
    </location>
</feature>
<feature type="modified residue" description="Phosphoserine" evidence="1">
    <location>
        <position position="719"/>
    </location>
</feature>
<feature type="modified residue" description="Phosphoserine" evidence="1">
    <location>
        <position position="867"/>
    </location>
</feature>
<feature type="modified residue" description="Phosphoserine" evidence="1">
    <location>
        <position position="1113"/>
    </location>
</feature>
<feature type="modified residue" description="Phosphoserine" evidence="1">
    <location>
        <position position="1149"/>
    </location>
</feature>
<feature type="cross-link" description="Glycyl lysine isopeptide (Lys-Gly) (interchain with G-Cter in SUMO2)" evidence="1">
    <location>
        <position position="481"/>
    </location>
</feature>
<feature type="cross-link" description="Glycyl lysine isopeptide (Lys-Gly) (interchain with G-Cter in SUMO2)" evidence="1">
    <location>
        <position position="723"/>
    </location>
</feature>
<feature type="cross-link" description="Glycyl lysine isopeptide (Lys-Gly) (interchain with G-Cter in SUMO2)" evidence="1">
    <location>
        <position position="743"/>
    </location>
</feature>
<feature type="sequence conflict" description="In Ref. 2; AAH25436." evidence="9" ref="2">
    <original>EE</original>
    <variation>KK</variation>
    <location>
        <begin position="419"/>
        <end position="420"/>
    </location>
</feature>
<feature type="sequence conflict" description="In Ref. 2; AAI58110." evidence="9" ref="2">
    <original>D</original>
    <variation>E</variation>
    <location>
        <position position="491"/>
    </location>
</feature>
<feature type="sequence conflict" description="In Ref. 2; AAI57976." evidence="9" ref="2">
    <location>
        <position position="534"/>
    </location>
</feature>
<feature type="sequence conflict" description="In Ref. 2; AAH58209." evidence="9" ref="2">
    <original>I</original>
    <variation>K</variation>
    <location>
        <position position="535"/>
    </location>
</feature>
<feature type="sequence conflict" description="In Ref. 2; AAI57976." evidence="9" ref="2">
    <original>A</original>
    <variation>G</variation>
    <location>
        <position position="732"/>
    </location>
</feature>
<feature type="sequence conflict" description="In Ref. 2; AAI57976." evidence="9" ref="2">
    <original>F</original>
    <variation>L</variation>
    <location>
        <position position="786"/>
    </location>
</feature>
<feature type="sequence conflict" description="In Ref. 2; AAI57976." evidence="9" ref="2">
    <original>T</original>
    <variation>S</variation>
    <location>
        <position position="1134"/>
    </location>
</feature>
<feature type="sequence conflict" description="In Ref. 2; AAI57976." evidence="9" ref="2">
    <original>S</original>
    <variation>P</variation>
    <location>
        <position position="1138"/>
    </location>
</feature>
<name>ARI4A_MOUSE</name>
<organism evidence="14">
    <name type="scientific">Mus musculus</name>
    <name type="common">Mouse</name>
    <dbReference type="NCBI Taxonomy" id="10090"/>
    <lineage>
        <taxon>Eukaryota</taxon>
        <taxon>Metazoa</taxon>
        <taxon>Chordata</taxon>
        <taxon>Craniata</taxon>
        <taxon>Vertebrata</taxon>
        <taxon>Euteleostomi</taxon>
        <taxon>Mammalia</taxon>
        <taxon>Eutheria</taxon>
        <taxon>Euarchontoglires</taxon>
        <taxon>Glires</taxon>
        <taxon>Rodentia</taxon>
        <taxon>Myomorpha</taxon>
        <taxon>Muroidea</taxon>
        <taxon>Muridae</taxon>
        <taxon>Murinae</taxon>
        <taxon>Mus</taxon>
        <taxon>Mus</taxon>
    </lineage>
</organism>
<gene>
    <name evidence="8 13" type="primary">Arid4a</name>
    <name evidence="8" type="synonym">Rbbp1</name>
    <name evidence="8" type="synonym">Rbp1</name>
</gene>
<comment type="function">
    <text evidence="1 5 6 7">DNA-binding protein which modulates activity of several transcription factors including RB1 (retinoblastoma-associated protein) and AR (androgen receptor) (PubMed:17043311, PubMed:23487765). May function as part of an mSin3A repressor complex (By similarity). Has no intrinsic transcriptional activity (PubMed:23487765). Plays a role in the regulation of epigenetic modifications at the PWS/AS imprinting center near the SNRPN promoter, where it might function as part of a complex with RB1 and ARID4B (PubMed:17043311). Involved in spermatogenesis, together with ARID4B, where it acts as a transcriptional coactivator for AR and enhances expression of genes required for sperm maturation (PubMed:23487765). Regulates expression of the tight junction protein CLDN3 in the testis, which is important for integrity of the blood-testis barrier (PubMed:23487765). Plays a role in myeloid homeostasis where it regulates the histone methylation state of bone marrow cells and expression of various genes involved in hematopoiesis (PubMed:18728284). May function as a leukemia suppressor (PubMed:18728284).</text>
</comment>
<comment type="subunit">
    <text evidence="1 5 7">Identified in mSin3A corepressor complexes together with SIN3A, SIN3B, RBBP4, RBBP7, SAP30, BRMS1, HDAC1 and HDAC2 (By similarity). Interacts with BRMS1 (By similarity). Interacts with RB1 (By similarity). Interacts with ARID4B (PubMed:17043311). Interacts with AR (PubMed:23487765).</text>
</comment>
<comment type="subcellular location">
    <subcellularLocation>
        <location evidence="2 10 11">Nucleus</location>
    </subcellularLocation>
</comment>
<comment type="tissue specificity">
    <text evidence="7">Expressed in Sertoli cells of the testis.</text>
</comment>
<comment type="domain">
    <text evidence="1">The function of the Tudor-knot domain, also named chromodomain-like, is uncertain. One study suggests that it mediates binding to lysine-methylated histone tails, with strongest affinity for H4K20me3 and H3K36me3. However, another study failed to find any interaction between this domain and histone H4K20me3 peptide.</text>
</comment>
<comment type="disruption phenotype">
    <text evidence="5 6 7">Viable and fertile, although females have reduced fertility (PubMed:17043311, PubMed:18728284). At two months of age, animals show abnormal blood cell production accompanied by mild anemia, leukopenia and thrombocytopenia. Hematologic abnormalities become progressively more severe with age (PubMed:18728284). Monocytosis is observed at 5 months onwards, along with splenomegaly and hepatomegaly (PubMed:18728284). Approximately 12% of animals develop acute myeloid leukemia (AML) and/or myeloid sarcoma (PubMed:18728284). Mortality increases rapidly from age 6 months onwards, with no survival past 22 months (PubMed:18728284). Expansion of hematopoietic stem cell and common myeloid progenitor cell populations, and their downstream lineage, is observed in bone marrow and spleen; the effect is most significant in spleen (PubMed:18728284). Bone marrow cells show altered patterns of histone methylation and significantly increased levels of both H3K4me3 and H3K9me3 (PubMed:18728284). Expression of HOXB3, HOXB5, HOXB6, HOXB8 and PITX2 in bone marrow cells is reduced (PubMed:18728284). No effect on histone methylation at the PWS/AS imprinting center (PubMed:17043311). Double knockouts with ARID4B heterozygotes show a more severe hematologic phenotype with 83% of animals progressing to AML, and with earlier age of onset (PubMed:18728284). In bone marrow cells, expression of FOXP3 is significantly reduced (PubMed:18728284). Males show progressive reduction in fertility from 2 months of age onwards, with reduced testis size and variable defects in seminal vesicle formation (PubMed:23487765). Spermatogenesis is partially blocked from the meiois II stage onwards leading to reduced numbers of mature spermatozoa (PubMed:23487765). Expression in testis of CLDN3, an androgen receptor-regulated gene, is significantly reduced (PubMed:23487765). Expression of PTGDS is also reduced, whereas expression of INHA and EMB is moderately increased (PubMed:23487765). Maternal-specific trimethylation of H4K20 and H3K9 at the PWS/AS imprinting center is significantly reduced (PubMed:17043311).</text>
</comment>
<dbReference type="EMBL" id="AC112794">
    <property type="status" value="NOT_ANNOTATED_CDS"/>
    <property type="molecule type" value="Genomic_DNA"/>
</dbReference>
<dbReference type="EMBL" id="AC132325">
    <property type="status" value="NOT_ANNOTATED_CDS"/>
    <property type="molecule type" value="Genomic_DNA"/>
</dbReference>
<dbReference type="EMBL" id="BC025436">
    <property type="protein sequence ID" value="AAH25436.1"/>
    <property type="molecule type" value="mRNA"/>
</dbReference>
<dbReference type="EMBL" id="BC058209">
    <property type="protein sequence ID" value="AAH58209.1"/>
    <property type="molecule type" value="mRNA"/>
</dbReference>
<dbReference type="EMBL" id="BC157975">
    <property type="protein sequence ID" value="AAI57976.1"/>
    <property type="molecule type" value="mRNA"/>
</dbReference>
<dbReference type="EMBL" id="BC158109">
    <property type="protein sequence ID" value="AAI58110.1"/>
    <property type="molecule type" value="mRNA"/>
</dbReference>
<dbReference type="CCDS" id="CCDS36471.1"/>
<dbReference type="RefSeq" id="NP_001074664.1">
    <property type="nucleotide sequence ID" value="NM_001081195.1"/>
</dbReference>
<dbReference type="RefSeq" id="XP_017170546.1">
    <property type="nucleotide sequence ID" value="XM_017315057.1"/>
</dbReference>
<dbReference type="SMR" id="F8VPQ2"/>
<dbReference type="ComplexPortal" id="CPX-3441">
    <property type="entry name" value="SIN3A histone deacetylase complex, ES cell-specific variant"/>
</dbReference>
<dbReference type="ComplexPortal" id="CPX-3443">
    <property type="entry name" value="SIN3A histone deacetylase complex"/>
</dbReference>
<dbReference type="ComplexPortal" id="CPX-3444">
    <property type="entry name" value="SIN3B histone deacetylase complex"/>
</dbReference>
<dbReference type="FunCoup" id="F8VPQ2">
    <property type="interactions" value="3715"/>
</dbReference>
<dbReference type="STRING" id="10090.ENSMUSP00000035512"/>
<dbReference type="iPTMnet" id="F8VPQ2"/>
<dbReference type="PhosphoSitePlus" id="F8VPQ2"/>
<dbReference type="jPOST" id="F8VPQ2"/>
<dbReference type="PaxDb" id="10090-ENSMUSP00000035512"/>
<dbReference type="ProteomicsDB" id="313983"/>
<dbReference type="Pumba" id="F8VPQ2"/>
<dbReference type="Antibodypedia" id="11317">
    <property type="antibodies" value="62 antibodies from 18 providers"/>
</dbReference>
<dbReference type="DNASU" id="238247"/>
<dbReference type="Ensembl" id="ENSMUST00000046305.12">
    <property type="protein sequence ID" value="ENSMUSP00000035512.6"/>
    <property type="gene ID" value="ENSMUSG00000048118.18"/>
</dbReference>
<dbReference type="GeneID" id="238247"/>
<dbReference type="KEGG" id="mmu:238247"/>
<dbReference type="UCSC" id="uc007nud.1">
    <property type="organism name" value="mouse"/>
</dbReference>
<dbReference type="AGR" id="MGI:2444354"/>
<dbReference type="CTD" id="5926"/>
<dbReference type="MGI" id="MGI:2444354">
    <property type="gene designation" value="Arid4a"/>
</dbReference>
<dbReference type="VEuPathDB" id="HostDB:ENSMUSG00000048118"/>
<dbReference type="eggNOG" id="KOG2744">
    <property type="taxonomic scope" value="Eukaryota"/>
</dbReference>
<dbReference type="eggNOG" id="KOG3001">
    <property type="taxonomic scope" value="Eukaryota"/>
</dbReference>
<dbReference type="GeneTree" id="ENSGT00940000156159"/>
<dbReference type="HOGENOM" id="CLU_007419_1_0_1"/>
<dbReference type="InParanoid" id="F8VPQ2"/>
<dbReference type="OMA" id="ENPKIAH"/>
<dbReference type="OrthoDB" id="10068428at2759"/>
<dbReference type="PhylomeDB" id="F8VPQ2"/>
<dbReference type="TreeFam" id="TF106427"/>
<dbReference type="Reactome" id="R-MMU-3214815">
    <property type="pathway name" value="HDACs deacetylate histones"/>
</dbReference>
<dbReference type="BioGRID-ORCS" id="238247">
    <property type="hits" value="13 hits in 84 CRISPR screens"/>
</dbReference>
<dbReference type="ChiTaRS" id="Arid4a">
    <property type="organism name" value="mouse"/>
</dbReference>
<dbReference type="PRO" id="PR:F8VPQ2"/>
<dbReference type="Proteomes" id="UP000000589">
    <property type="component" value="Chromosome 12"/>
</dbReference>
<dbReference type="RNAct" id="F8VPQ2">
    <property type="molecule type" value="protein"/>
</dbReference>
<dbReference type="Bgee" id="ENSMUSG00000048118">
    <property type="expression patterns" value="Expressed in animal zygote and 226 other cell types or tissues"/>
</dbReference>
<dbReference type="ExpressionAtlas" id="F8VPQ2">
    <property type="expression patterns" value="baseline and differential"/>
</dbReference>
<dbReference type="GO" id="GO:0005634">
    <property type="term" value="C:nucleus"/>
    <property type="evidence" value="ECO:0000303"/>
    <property type="project" value="ComplexPortal"/>
</dbReference>
<dbReference type="GO" id="GO:0005886">
    <property type="term" value="C:plasma membrane"/>
    <property type="evidence" value="ECO:0007669"/>
    <property type="project" value="Ensembl"/>
</dbReference>
<dbReference type="GO" id="GO:0070822">
    <property type="term" value="C:Sin3-type complex"/>
    <property type="evidence" value="ECO:0000303"/>
    <property type="project" value="ComplexPortal"/>
</dbReference>
<dbReference type="GO" id="GO:0017053">
    <property type="term" value="C:transcription repressor complex"/>
    <property type="evidence" value="ECO:0007669"/>
    <property type="project" value="Ensembl"/>
</dbReference>
<dbReference type="GO" id="GO:0003690">
    <property type="term" value="F:double-stranded DNA binding"/>
    <property type="evidence" value="ECO:0007669"/>
    <property type="project" value="InterPro"/>
</dbReference>
<dbReference type="GO" id="GO:0006325">
    <property type="term" value="P:chromatin organization"/>
    <property type="evidence" value="ECO:0000315"/>
    <property type="project" value="MGI"/>
</dbReference>
<dbReference type="GO" id="GO:0048821">
    <property type="term" value="P:erythrocyte development"/>
    <property type="evidence" value="ECO:0000315"/>
    <property type="project" value="MGI"/>
</dbReference>
<dbReference type="GO" id="GO:0097368">
    <property type="term" value="P:establishment of Sertoli cell barrier"/>
    <property type="evidence" value="ECO:0000316"/>
    <property type="project" value="MGI"/>
</dbReference>
<dbReference type="GO" id="GO:0071514">
    <property type="term" value="P:genomic imprinting"/>
    <property type="evidence" value="ECO:0000316"/>
    <property type="project" value="MGI"/>
</dbReference>
<dbReference type="GO" id="GO:0030336">
    <property type="term" value="P:negative regulation of cell migration"/>
    <property type="evidence" value="ECO:0000303"/>
    <property type="project" value="ComplexPortal"/>
</dbReference>
<dbReference type="GO" id="GO:1902455">
    <property type="term" value="P:negative regulation of stem cell population maintenance"/>
    <property type="evidence" value="ECO:0000303"/>
    <property type="project" value="ComplexPortal"/>
</dbReference>
<dbReference type="GO" id="GO:0000122">
    <property type="term" value="P:negative regulation of transcription by RNA polymerase II"/>
    <property type="evidence" value="ECO:0000303"/>
    <property type="project" value="ComplexPortal"/>
</dbReference>
<dbReference type="GO" id="GO:0030512">
    <property type="term" value="P:negative regulation of transforming growth factor beta receptor signaling pathway"/>
    <property type="evidence" value="ECO:0000303"/>
    <property type="project" value="ComplexPortal"/>
</dbReference>
<dbReference type="GO" id="GO:1902459">
    <property type="term" value="P:positive regulation of stem cell population maintenance"/>
    <property type="evidence" value="ECO:0000303"/>
    <property type="project" value="ComplexPortal"/>
</dbReference>
<dbReference type="GO" id="GO:0045944">
    <property type="term" value="P:positive regulation of transcription by RNA polymerase II"/>
    <property type="evidence" value="ECO:0000316"/>
    <property type="project" value="MGI"/>
</dbReference>
<dbReference type="GO" id="GO:0007283">
    <property type="term" value="P:spermatogenesis"/>
    <property type="evidence" value="ECO:0000316"/>
    <property type="project" value="MGI"/>
</dbReference>
<dbReference type="GO" id="GO:0006366">
    <property type="term" value="P:transcription by RNA polymerase II"/>
    <property type="evidence" value="ECO:0000316"/>
    <property type="project" value="MGI"/>
</dbReference>
<dbReference type="CDD" id="cd16882">
    <property type="entry name" value="ARID_ARID4A"/>
    <property type="match status" value="1"/>
</dbReference>
<dbReference type="CDD" id="cd18641">
    <property type="entry name" value="CBD_RBP1_like"/>
    <property type="match status" value="1"/>
</dbReference>
<dbReference type="CDD" id="cd20459">
    <property type="entry name" value="Tudor_ARID4A_rpt1"/>
    <property type="match status" value="1"/>
</dbReference>
<dbReference type="FunFam" id="2.30.30.140:FF:000050">
    <property type="entry name" value="AT-rich interactive domain 4A (RBP1-like)"/>
    <property type="match status" value="1"/>
</dbReference>
<dbReference type="FunFam" id="2.30.30.140:FF:000012">
    <property type="entry name" value="AT-rich interactive domain-containing protein 4A"/>
    <property type="match status" value="1"/>
</dbReference>
<dbReference type="FunFam" id="1.10.150.60:FF:000003">
    <property type="entry name" value="AT-rich interactive domain-containing protein 4B"/>
    <property type="match status" value="1"/>
</dbReference>
<dbReference type="FunFam" id="2.30.30.140:FF:000009">
    <property type="entry name" value="AT-rich interactive domain-containing protein 4B"/>
    <property type="match status" value="1"/>
</dbReference>
<dbReference type="Gene3D" id="2.30.30.140">
    <property type="match status" value="3"/>
</dbReference>
<dbReference type="Gene3D" id="1.10.150.60">
    <property type="entry name" value="ARID DNA-binding domain"/>
    <property type="match status" value="1"/>
</dbReference>
<dbReference type="InterPro" id="IPR051232">
    <property type="entry name" value="ARID/SWI1_ChromRemod"/>
</dbReference>
<dbReference type="InterPro" id="IPR012603">
    <property type="entry name" value="ARID4A/B_PWWP"/>
</dbReference>
<dbReference type="InterPro" id="IPR001606">
    <property type="entry name" value="ARID_dom"/>
</dbReference>
<dbReference type="InterPro" id="IPR036431">
    <property type="entry name" value="ARID_dom_sf"/>
</dbReference>
<dbReference type="InterPro" id="IPR047473">
    <property type="entry name" value="CBD_RBP1-like"/>
</dbReference>
<dbReference type="InterPro" id="IPR016197">
    <property type="entry name" value="Chromo-like_dom_sf"/>
</dbReference>
<dbReference type="InterPro" id="IPR000953">
    <property type="entry name" value="Chromo/chromo_shadow_dom"/>
</dbReference>
<dbReference type="InterPro" id="IPR002999">
    <property type="entry name" value="Tudor"/>
</dbReference>
<dbReference type="InterPro" id="IPR025995">
    <property type="entry name" value="Tudor-knot"/>
</dbReference>
<dbReference type="InterPro" id="IPR047472">
    <property type="entry name" value="Tudor_ARID4A_rpt1"/>
</dbReference>
<dbReference type="PANTHER" id="PTHR13964:SF26">
    <property type="entry name" value="AT-RICH INTERACTIVE DOMAIN-CONTAINING PROTEIN 4A"/>
    <property type="match status" value="1"/>
</dbReference>
<dbReference type="PANTHER" id="PTHR13964">
    <property type="entry name" value="RBP-RELATED"/>
    <property type="match status" value="1"/>
</dbReference>
<dbReference type="Pfam" id="PF01388">
    <property type="entry name" value="ARID"/>
    <property type="match status" value="1"/>
</dbReference>
<dbReference type="Pfam" id="PF08169">
    <property type="entry name" value="RBB1NT"/>
    <property type="match status" value="1"/>
</dbReference>
<dbReference type="Pfam" id="PF11717">
    <property type="entry name" value="Tudor-knot"/>
    <property type="match status" value="1"/>
</dbReference>
<dbReference type="SMART" id="SM01014">
    <property type="entry name" value="ARID"/>
    <property type="match status" value="1"/>
</dbReference>
<dbReference type="SMART" id="SM00501">
    <property type="entry name" value="BRIGHT"/>
    <property type="match status" value="1"/>
</dbReference>
<dbReference type="SMART" id="SM00298">
    <property type="entry name" value="CHROMO"/>
    <property type="match status" value="1"/>
</dbReference>
<dbReference type="SMART" id="SM00333">
    <property type="entry name" value="TUDOR"/>
    <property type="match status" value="1"/>
</dbReference>
<dbReference type="SUPFAM" id="SSF46774">
    <property type="entry name" value="ARID-like"/>
    <property type="match status" value="1"/>
</dbReference>
<dbReference type="SUPFAM" id="SSF54160">
    <property type="entry name" value="Chromo domain-like"/>
    <property type="match status" value="1"/>
</dbReference>
<dbReference type="SUPFAM" id="SSF63748">
    <property type="entry name" value="Tudor/PWWP/MBT"/>
    <property type="match status" value="1"/>
</dbReference>
<dbReference type="PROSITE" id="PS51011">
    <property type="entry name" value="ARID"/>
    <property type="match status" value="1"/>
</dbReference>
<evidence type="ECO:0000250" key="1">
    <source>
        <dbReference type="UniProtKB" id="P29374"/>
    </source>
</evidence>
<evidence type="ECO:0000255" key="2"/>
<evidence type="ECO:0000255" key="3">
    <source>
        <dbReference type="PROSITE-ProRule" id="PRU00355"/>
    </source>
</evidence>
<evidence type="ECO:0000256" key="4">
    <source>
        <dbReference type="SAM" id="MobiDB-lite"/>
    </source>
</evidence>
<evidence type="ECO:0000269" key="5">
    <source>
    </source>
</evidence>
<evidence type="ECO:0000269" key="6">
    <source>
    </source>
</evidence>
<evidence type="ECO:0000269" key="7">
    <source>
    </source>
</evidence>
<evidence type="ECO:0000303" key="8">
    <source>
    </source>
</evidence>
<evidence type="ECO:0000305" key="9"/>
<evidence type="ECO:0000305" key="10">
    <source>
    </source>
</evidence>
<evidence type="ECO:0000305" key="11">
    <source>
    </source>
</evidence>
<evidence type="ECO:0000312" key="12">
    <source>
        <dbReference type="EMBL" id="AAI58110.1"/>
    </source>
</evidence>
<evidence type="ECO:0000312" key="13">
    <source>
        <dbReference type="MGI" id="MGI:2444354"/>
    </source>
</evidence>
<evidence type="ECO:0000312" key="14">
    <source>
        <dbReference type="Proteomes" id="UP000000589"/>
    </source>
</evidence>
<evidence type="ECO:0007744" key="15">
    <source>
    </source>
</evidence>
<keyword id="KW-0156">Chromatin regulator</keyword>
<keyword id="KW-0221">Differentiation</keyword>
<keyword id="KW-0238">DNA-binding</keyword>
<keyword id="KW-1017">Isopeptide bond</keyword>
<keyword id="KW-0539">Nucleus</keyword>
<keyword id="KW-0597">Phosphoprotein</keyword>
<keyword id="KW-1185">Reference proteome</keyword>
<keyword id="KW-0744">Spermatogenesis</keyword>
<keyword id="KW-0804">Transcription</keyword>
<keyword id="KW-0805">Transcription regulation</keyword>
<keyword id="KW-0832">Ubl conjugation</keyword>
<sequence>MKAADEPAYLTVGTDVSAKYRGAFCEAKIKTVKRLVKVKVLLKQDNTTQLVQDDQVKGPLRVGAIVETRTSDGSIQEAIISKLTDASWYTVVFDDGDERTLRRTSLCLKGERHFAESETLDQLPLTNPEHFGTPVIAKKTNRGRRSSLPITEDEKEEESSEEEDEDKRRLNDELLGKVVSVASTAESTGWYPALVVSPSCNDDVTVKKDQCLVRSFIDSKFYSIARKDIKELDILTLPESELCARPGLRRASVFLKGRIVPDNWKMDISEILESSSSDDEECPAEEHEEEKEKEAKKEEEELPEEELDPEERDNFLQQLYKFMEDRGTPINKPPVLGYKDLNLFKLFRLVYHQGGCGNIDSGAVWKQIYMDLGIPILNSAASYNVKTAYRKYLYGFEEYCRSANIQFRTIHHHEPKVKEEKKDFEDSMDEALKEAPEMPLLDVKSEPEENTDSNSESDREDTELKSPRGRRKIVRDANCIKKEIEEEKIEDKFLRDDLENKDAGDDDDDGDPAAKREHELLFGRKSTPKNKEKKIKKPEDSERDSDEEEEKSQEREETESRCDSEGEDEEDDTEPCLTGTKVKVKYGRGKTQKIYEASIKSTEMDDGEILYLVHYYGWNVRYDEWVKADRIIWPLDKGGPKKKQKKKVKNKEDSEKDEKRDEERQKSKRGRPPLKSTFSPNMPYSLSKTSNSEGKSDSCSSDSEADDQLEKSSGGEDLSPDVKEELEKNENAHDDKLDEENPKIVHISKENDRTQAQPSDTLTVEAGDSDQIVHIFGDKVDQVEEFKKQVEKSPKGKGRRSKTKDLSLELIKISPFGQEEAGSEAHGDVHSLEFSSLECKNFSSTEDDIDPYEKEKKLKRKILGQQSPEKKLRLDNGMEMTTGVSQERSDDGAGAEGMKGAHVEQHFETEGEGMPSLTAEPDQGLQELTSEKSDSPAEEEPVHTPLKEEEDAMPLIGPETLVCHEVDLDDLDEKDKTSIEDVVVEGSESNSLASVPPALPPVAQHNFSVASPLTLSQDESRSIKSESDITIEVDSIAEESQEGLCERESANGFEASVASGACSIIAHERESREKGQKRPSDGNSGLIAKKQKRTPKRTSAAAKTEKNGAGQSSDSEDLPAMDSSSNCTPVKRLTLPKSQKLPRSPARTSPHIKDAEKEKHREKHPNSSPRTYKWSFQLNELDNMNSTERISFLQEKLQEIRKYYMSLKSEVATIDRRRKRLKKKDREVSHAGASMSSASSDTGMSPSSSSPPQNVLAVECR</sequence>